<organism>
    <name type="scientific">Burkholderia multivorans (strain ATCC 17616 / 249)</name>
    <dbReference type="NCBI Taxonomy" id="395019"/>
    <lineage>
        <taxon>Bacteria</taxon>
        <taxon>Pseudomonadati</taxon>
        <taxon>Pseudomonadota</taxon>
        <taxon>Betaproteobacteria</taxon>
        <taxon>Burkholderiales</taxon>
        <taxon>Burkholderiaceae</taxon>
        <taxon>Burkholderia</taxon>
        <taxon>Burkholderia cepacia complex</taxon>
    </lineage>
</organism>
<name>LPXB_BURM1</name>
<accession>A9AIM7</accession>
<reference key="1">
    <citation type="submission" date="2007-10" db="EMBL/GenBank/DDBJ databases">
        <title>Complete sequence of chromosome 1 of Burkholderia multivorans ATCC 17616.</title>
        <authorList>
            <person name="Copeland A."/>
            <person name="Lucas S."/>
            <person name="Lapidus A."/>
            <person name="Barry K."/>
            <person name="Glavina del Rio T."/>
            <person name="Dalin E."/>
            <person name="Tice H."/>
            <person name="Pitluck S."/>
            <person name="Chain P."/>
            <person name="Malfatti S."/>
            <person name="Shin M."/>
            <person name="Vergez L."/>
            <person name="Schmutz J."/>
            <person name="Larimer F."/>
            <person name="Land M."/>
            <person name="Hauser L."/>
            <person name="Kyrpides N."/>
            <person name="Kim E."/>
            <person name="Tiedje J."/>
            <person name="Richardson P."/>
        </authorList>
    </citation>
    <scope>NUCLEOTIDE SEQUENCE [LARGE SCALE GENOMIC DNA]</scope>
    <source>
        <strain>ATCC 17616 / 249</strain>
    </source>
</reference>
<reference key="2">
    <citation type="submission" date="2007-04" db="EMBL/GenBank/DDBJ databases">
        <title>Complete genome sequence of Burkholderia multivorans ATCC 17616.</title>
        <authorList>
            <person name="Ohtsubo Y."/>
            <person name="Yamashita A."/>
            <person name="Kurokawa K."/>
            <person name="Takami H."/>
            <person name="Yuhara S."/>
            <person name="Nishiyama E."/>
            <person name="Endo R."/>
            <person name="Miyazaki R."/>
            <person name="Ono A."/>
            <person name="Yano K."/>
            <person name="Ito M."/>
            <person name="Sota M."/>
            <person name="Yuji N."/>
            <person name="Hattori M."/>
            <person name="Tsuda M."/>
        </authorList>
    </citation>
    <scope>NUCLEOTIDE SEQUENCE [LARGE SCALE GENOMIC DNA]</scope>
    <source>
        <strain>ATCC 17616 / 249</strain>
    </source>
</reference>
<comment type="function">
    <text evidence="1">Condensation of UDP-2,3-diacylglucosamine and 2,3-diacylglucosamine-1-phosphate to form lipid A disaccharide, a precursor of lipid A, a phosphorylated glycolipid that anchors the lipopolysaccharide to the outer membrane of the cell.</text>
</comment>
<comment type="catalytic activity">
    <reaction evidence="1">
        <text>a lipid X + a UDP-2-N,3-O-bis[(3R)-3-hydroxyacyl]-alpha-D-glucosamine = a lipid A disaccharide + UDP + H(+)</text>
        <dbReference type="Rhea" id="RHEA:67828"/>
        <dbReference type="ChEBI" id="CHEBI:15378"/>
        <dbReference type="ChEBI" id="CHEBI:58223"/>
        <dbReference type="ChEBI" id="CHEBI:137748"/>
        <dbReference type="ChEBI" id="CHEBI:176338"/>
        <dbReference type="ChEBI" id="CHEBI:176343"/>
        <dbReference type="EC" id="2.4.1.182"/>
    </reaction>
</comment>
<comment type="pathway">
    <text evidence="1">Bacterial outer membrane biogenesis; LPS lipid A biosynthesis.</text>
</comment>
<comment type="similarity">
    <text evidence="1">Belongs to the LpxB family.</text>
</comment>
<keyword id="KW-0328">Glycosyltransferase</keyword>
<keyword id="KW-0441">Lipid A biosynthesis</keyword>
<keyword id="KW-0444">Lipid biosynthesis</keyword>
<keyword id="KW-0443">Lipid metabolism</keyword>
<keyword id="KW-1185">Reference proteome</keyword>
<keyword id="KW-0808">Transferase</keyword>
<proteinExistence type="inferred from homology"/>
<evidence type="ECO:0000255" key="1">
    <source>
        <dbReference type="HAMAP-Rule" id="MF_00392"/>
    </source>
</evidence>
<protein>
    <recommendedName>
        <fullName evidence="1">Lipid-A-disaccharide synthase</fullName>
        <ecNumber evidence="1">2.4.1.182</ecNumber>
    </recommendedName>
</protein>
<gene>
    <name evidence="1" type="primary">lpxB</name>
    <name type="ordered locus">Bmul_1270</name>
    <name type="ordered locus">BMULJ_01977</name>
</gene>
<sequence length="389" mass="42378">MPLPTTQLRLAMVAGEPSGDLLAASLLGGLRERLPAPTHYYGIGGARMIAQGFDSHWQMDKLTVRGYVEALGQIPEILRIRGELKRQLLAERPDAFIGVDAPDFNFNVEQAARDAGIPSIHFVCPSIWAWRGGRIKKIAKSVDHMLCLFPFEPAILDKAGVASTYVGHPLADEIPLEPDTHGARIALGLPADGPVIAVLPGSRRSEIALIGPTFFAAMALMQQREPGLRFVMPAATPALRELLQPLVDAHPQLALTITDGRSQVAMTAADAILVKSGTVTLEAALLKKPMVISYKVPWLTGQIMRRQGYLPYVGLPNILAGRFVVPELLQHFATPEALADATLTQLRDDANRRTLTEVFTEMHLSLRQNTAAKAAEAVARVLDQRKRRA</sequence>
<dbReference type="EC" id="2.4.1.182" evidence="1"/>
<dbReference type="EMBL" id="CP000868">
    <property type="protein sequence ID" value="ABX14958.1"/>
    <property type="molecule type" value="Genomic_DNA"/>
</dbReference>
<dbReference type="EMBL" id="AP009385">
    <property type="protein sequence ID" value="BAG43894.1"/>
    <property type="molecule type" value="Genomic_DNA"/>
</dbReference>
<dbReference type="RefSeq" id="WP_012213142.1">
    <property type="nucleotide sequence ID" value="NC_010084.1"/>
</dbReference>
<dbReference type="SMR" id="A9AIM7"/>
<dbReference type="STRING" id="395019.BMULJ_01977"/>
<dbReference type="CAZy" id="GT19">
    <property type="family name" value="Glycosyltransferase Family 19"/>
</dbReference>
<dbReference type="KEGG" id="bmj:BMULJ_01977"/>
<dbReference type="KEGG" id="bmu:Bmul_1270"/>
<dbReference type="eggNOG" id="COG0763">
    <property type="taxonomic scope" value="Bacteria"/>
</dbReference>
<dbReference type="HOGENOM" id="CLU_036577_3_0_4"/>
<dbReference type="UniPathway" id="UPA00973"/>
<dbReference type="Proteomes" id="UP000008815">
    <property type="component" value="Chromosome 1"/>
</dbReference>
<dbReference type="GO" id="GO:0016020">
    <property type="term" value="C:membrane"/>
    <property type="evidence" value="ECO:0007669"/>
    <property type="project" value="GOC"/>
</dbReference>
<dbReference type="GO" id="GO:0008915">
    <property type="term" value="F:lipid-A-disaccharide synthase activity"/>
    <property type="evidence" value="ECO:0007669"/>
    <property type="project" value="UniProtKB-UniRule"/>
</dbReference>
<dbReference type="GO" id="GO:0005543">
    <property type="term" value="F:phospholipid binding"/>
    <property type="evidence" value="ECO:0007669"/>
    <property type="project" value="TreeGrafter"/>
</dbReference>
<dbReference type="GO" id="GO:0009245">
    <property type="term" value="P:lipid A biosynthetic process"/>
    <property type="evidence" value="ECO:0007669"/>
    <property type="project" value="UniProtKB-UniRule"/>
</dbReference>
<dbReference type="HAMAP" id="MF_00392">
    <property type="entry name" value="LpxB"/>
    <property type="match status" value="1"/>
</dbReference>
<dbReference type="InterPro" id="IPR003835">
    <property type="entry name" value="Glyco_trans_19"/>
</dbReference>
<dbReference type="NCBIfam" id="TIGR00215">
    <property type="entry name" value="lpxB"/>
    <property type="match status" value="1"/>
</dbReference>
<dbReference type="PANTHER" id="PTHR30372">
    <property type="entry name" value="LIPID-A-DISACCHARIDE SYNTHASE"/>
    <property type="match status" value="1"/>
</dbReference>
<dbReference type="PANTHER" id="PTHR30372:SF4">
    <property type="entry name" value="LIPID-A-DISACCHARIDE SYNTHASE, MITOCHONDRIAL-RELATED"/>
    <property type="match status" value="1"/>
</dbReference>
<dbReference type="Pfam" id="PF02684">
    <property type="entry name" value="LpxB"/>
    <property type="match status" value="1"/>
</dbReference>
<dbReference type="SUPFAM" id="SSF53756">
    <property type="entry name" value="UDP-Glycosyltransferase/glycogen phosphorylase"/>
    <property type="match status" value="1"/>
</dbReference>
<feature type="chain" id="PRO_1000191466" description="Lipid-A-disaccharide synthase">
    <location>
        <begin position="1"/>
        <end position="389"/>
    </location>
</feature>